<organism>
    <name type="scientific">Drosophila mojavensis</name>
    <name type="common">Fruit fly</name>
    <dbReference type="NCBI Taxonomy" id="7230"/>
    <lineage>
        <taxon>Eukaryota</taxon>
        <taxon>Metazoa</taxon>
        <taxon>Ecdysozoa</taxon>
        <taxon>Arthropoda</taxon>
        <taxon>Hexapoda</taxon>
        <taxon>Insecta</taxon>
        <taxon>Pterygota</taxon>
        <taxon>Neoptera</taxon>
        <taxon>Endopterygota</taxon>
        <taxon>Diptera</taxon>
        <taxon>Brachycera</taxon>
        <taxon>Muscomorpha</taxon>
        <taxon>Ephydroidea</taxon>
        <taxon>Drosophilidae</taxon>
        <taxon>Drosophila</taxon>
    </lineage>
</organism>
<protein>
    <recommendedName>
        <fullName evidence="1">Facilitated trehalose transporter Tret1</fullName>
    </recommendedName>
</protein>
<evidence type="ECO:0000250" key="1">
    <source>
        <dbReference type="UniProtKB" id="A1Z8N1"/>
    </source>
</evidence>
<evidence type="ECO:0000255" key="2"/>
<evidence type="ECO:0000256" key="3">
    <source>
        <dbReference type="SAM" id="MobiDB-lite"/>
    </source>
</evidence>
<evidence type="ECO:0000305" key="4"/>
<evidence type="ECO:0000312" key="5">
    <source>
        <dbReference type="EMBL" id="EDW10361.1"/>
    </source>
</evidence>
<name>TRET1_DROMO</name>
<dbReference type="EMBL" id="CH933808">
    <property type="protein sequence ID" value="EDW10361.1"/>
    <property type="status" value="ALT_SEQ"/>
    <property type="molecule type" value="Genomic_DNA"/>
</dbReference>
<dbReference type="SMR" id="B4KR05"/>
<dbReference type="FunCoup" id="B4KR05">
    <property type="interactions" value="166"/>
</dbReference>
<dbReference type="GlyCosmos" id="B4KR05">
    <property type="glycosylation" value="1 site, No reported glycans"/>
</dbReference>
<dbReference type="EnsemblMetazoa" id="FBtr0425257">
    <property type="protein sequence ID" value="FBpp0383036"/>
    <property type="gene ID" value="FBgn0141311"/>
</dbReference>
<dbReference type="EnsemblMetazoa" id="XM_002006390.4">
    <property type="protein sequence ID" value="XP_002006426.2"/>
    <property type="gene ID" value="LOC6580597"/>
</dbReference>
<dbReference type="GeneID" id="6580597"/>
<dbReference type="KEGG" id="dmo:Dmoj_GI18572"/>
<dbReference type="CTD" id="36248"/>
<dbReference type="eggNOG" id="KOG0254">
    <property type="taxonomic scope" value="Eukaryota"/>
</dbReference>
<dbReference type="InParanoid" id="B4KR05"/>
<dbReference type="OrthoDB" id="6339427at2759"/>
<dbReference type="Proteomes" id="UP000009192">
    <property type="component" value="Unassembled WGS sequence"/>
</dbReference>
<dbReference type="GO" id="GO:0005886">
    <property type="term" value="C:plasma membrane"/>
    <property type="evidence" value="ECO:0000250"/>
    <property type="project" value="UniProtKB"/>
</dbReference>
<dbReference type="GO" id="GO:0051119">
    <property type="term" value="F:sugar transmembrane transporter activity"/>
    <property type="evidence" value="ECO:0007669"/>
    <property type="project" value="InterPro"/>
</dbReference>
<dbReference type="GO" id="GO:0015574">
    <property type="term" value="F:trehalose transmembrane transporter activity"/>
    <property type="evidence" value="ECO:0000250"/>
    <property type="project" value="UniProtKB"/>
</dbReference>
<dbReference type="GO" id="GO:0015771">
    <property type="term" value="P:trehalose transport"/>
    <property type="evidence" value="ECO:0000250"/>
    <property type="project" value="UniProtKB"/>
</dbReference>
<dbReference type="CDD" id="cd17358">
    <property type="entry name" value="MFS_GLUT6_8_Class3_like"/>
    <property type="match status" value="1"/>
</dbReference>
<dbReference type="FunFam" id="1.20.1250.20:FF:000055">
    <property type="entry name" value="Facilitated trehalose transporter Tret1-2 homolog"/>
    <property type="match status" value="1"/>
</dbReference>
<dbReference type="Gene3D" id="1.20.1250.20">
    <property type="entry name" value="MFS general substrate transporter like domains"/>
    <property type="match status" value="1"/>
</dbReference>
<dbReference type="InterPro" id="IPR020846">
    <property type="entry name" value="MFS_dom"/>
</dbReference>
<dbReference type="InterPro" id="IPR044775">
    <property type="entry name" value="MFS_ERD6/Tret1-like"/>
</dbReference>
<dbReference type="InterPro" id="IPR005828">
    <property type="entry name" value="MFS_sugar_transport-like"/>
</dbReference>
<dbReference type="InterPro" id="IPR036259">
    <property type="entry name" value="MFS_trans_sf"/>
</dbReference>
<dbReference type="InterPro" id="IPR050549">
    <property type="entry name" value="MFS_Trehalose_Transporter"/>
</dbReference>
<dbReference type="InterPro" id="IPR003663">
    <property type="entry name" value="Sugar/inositol_transpt"/>
</dbReference>
<dbReference type="InterPro" id="IPR005829">
    <property type="entry name" value="Sugar_transporter_CS"/>
</dbReference>
<dbReference type="NCBIfam" id="TIGR00879">
    <property type="entry name" value="SP"/>
    <property type="match status" value="1"/>
</dbReference>
<dbReference type="PANTHER" id="PTHR48021">
    <property type="match status" value="1"/>
</dbReference>
<dbReference type="PANTHER" id="PTHR48021:SF96">
    <property type="entry name" value="FACILITATED TREHALOSE TRANSPORTER TRET1-1-RELATED"/>
    <property type="match status" value="1"/>
</dbReference>
<dbReference type="Pfam" id="PF00083">
    <property type="entry name" value="Sugar_tr"/>
    <property type="match status" value="1"/>
</dbReference>
<dbReference type="PRINTS" id="PR00171">
    <property type="entry name" value="SUGRTRNSPORT"/>
</dbReference>
<dbReference type="SUPFAM" id="SSF103473">
    <property type="entry name" value="MFS general substrate transporter"/>
    <property type="match status" value="1"/>
</dbReference>
<dbReference type="PROSITE" id="PS50850">
    <property type="entry name" value="MFS"/>
    <property type="match status" value="1"/>
</dbReference>
<dbReference type="PROSITE" id="PS00216">
    <property type="entry name" value="SUGAR_TRANSPORT_1"/>
    <property type="match status" value="1"/>
</dbReference>
<dbReference type="PROSITE" id="PS00217">
    <property type="entry name" value="SUGAR_TRANSPORT_2"/>
    <property type="match status" value="1"/>
</dbReference>
<reference evidence="5" key="1">
    <citation type="journal article" date="2007" name="Nature">
        <title>Evolution of genes and genomes on the Drosophila phylogeny.</title>
        <authorList>
            <consortium name="Drosophila 12 genomes consortium"/>
        </authorList>
    </citation>
    <scope>NUCLEOTIDE SEQUENCE [LARGE SCALE GENOMIC DNA]</scope>
    <source>
        <strain evidence="5">Tucson 15081-1352.22</strain>
    </source>
</reference>
<gene>
    <name evidence="1" type="primary">Tret1</name>
    <name type="ORF">GI18572</name>
</gene>
<sequence>MSGRDNRGAGGGGGGGHHHQPLSSAMGKLKEKLTRAGEELGYHRVESNLSASNTGTSLDTILPEDPFPFPQAAPQRHPQQQFPHLHPLRLLHDVDDEPPLSFRPLLEDDDINEPPQQIQQQRSALRSSGSLELTPLPPPPTSLEPHRDRQQRSIVTGGEELQRSKQSLKGSRVSFEKPQQQGNNKAAESSDEDSFEDKRIGFQQQKATSVDHKGILKDLRHILANDNRRQFQAKKHVSLDIKGTRFLQDLLKDSSSEEEFHKTRREFQGRKHQSLDPRVTFKLDKVLQGSSTDSDEEGDDAEHKRLIHRPKDITKPVIIDLKDLESESDEDFLTSRQNFQQQRSISTDSRKSRRLYEMDEMGNKRGDNIRHAVPFVRQITEDGKPKLEVYRPTTNPIYIWTQVLAALSVSLGSLVVGFASAYTSPALVSMTNTNLTSFVVTPQAASWVGGIMPLAGLAGGIAGGPFIEYLGRRNTILATAVPFIISWLLIACAVNVVMVLCGRFLAGFCVGIASLSLPVYLGETVQPEVRGTLGLLPTAFGNIGILLCFVAGTYMDWSMLAFLGGTLPVPFLILMFLIPETPRWYVSRGREERARKALVWLRGKEADVEPELKGLMRSQADADRQATQNTMLELLKRSNLKPLSISLGLMFFQQLSGINAVIFYTVQIFQDAGSTIDGNVCTIIVGVVNFMATFIATVLIDRAGRKILLYVSNVAMILTLFVLGGFFYCKSTGMDTSNVGWLPLSCFVVYILGFSLGFGPIPWLMMGEILPAKIRGSAASVATAFNWSCTFVVTKSFQDMIDVMGAHGAFWMFGAICFVGLFFVIFYVPETQGKTLEDIERKMMGRVRRMSSVANIKPLSFNM</sequence>
<keyword id="KW-1003">Cell membrane</keyword>
<keyword id="KW-0325">Glycoprotein</keyword>
<keyword id="KW-0472">Membrane</keyword>
<keyword id="KW-0597">Phosphoprotein</keyword>
<keyword id="KW-1185">Reference proteome</keyword>
<keyword id="KW-0762">Sugar transport</keyword>
<keyword id="KW-0812">Transmembrane</keyword>
<keyword id="KW-1133">Transmembrane helix</keyword>
<keyword id="KW-0813">Transport</keyword>
<accession>B4KR05</accession>
<feature type="chain" id="PRO_0000395545" description="Facilitated trehalose transporter Tret1">
    <location>
        <begin position="1"/>
        <end position="863"/>
    </location>
</feature>
<feature type="topological domain" description="Cytoplasmic" evidence="2">
    <location>
        <begin position="1"/>
        <end position="398"/>
    </location>
</feature>
<feature type="transmembrane region" description="Helical; Name=1" evidence="2">
    <location>
        <begin position="399"/>
        <end position="419"/>
    </location>
</feature>
<feature type="topological domain" description="Extracellular" evidence="2">
    <location>
        <begin position="420"/>
        <end position="446"/>
    </location>
</feature>
<feature type="transmembrane region" description="Helical; Name=2" evidence="2">
    <location>
        <begin position="447"/>
        <end position="467"/>
    </location>
</feature>
<feature type="topological domain" description="Cytoplasmic" evidence="2">
    <location>
        <begin position="468"/>
        <end position="479"/>
    </location>
</feature>
<feature type="transmembrane region" description="Helical; Name=3" evidence="2">
    <location>
        <begin position="480"/>
        <end position="500"/>
    </location>
</feature>
<feature type="topological domain" description="Extracellular" evidence="2">
    <location>
        <begin position="501"/>
        <end position="503"/>
    </location>
</feature>
<feature type="transmembrane region" description="Helical; Name=4" evidence="2">
    <location>
        <begin position="504"/>
        <end position="524"/>
    </location>
</feature>
<feature type="topological domain" description="Cytoplasmic" evidence="2">
    <location>
        <begin position="525"/>
        <end position="530"/>
    </location>
</feature>
<feature type="transmembrane region" description="Helical; Name=5" evidence="2">
    <location>
        <begin position="531"/>
        <end position="551"/>
    </location>
</feature>
<feature type="topological domain" description="Extracellular" evidence="2">
    <location>
        <begin position="552"/>
        <end position="558"/>
    </location>
</feature>
<feature type="transmembrane region" description="Helical; Name=6" evidence="2">
    <location>
        <begin position="559"/>
        <end position="579"/>
    </location>
</feature>
<feature type="topological domain" description="Cytoplasmic" evidence="2">
    <location>
        <begin position="580"/>
        <end position="642"/>
    </location>
</feature>
<feature type="transmembrane region" description="Helical; Name=7" evidence="2">
    <location>
        <begin position="643"/>
        <end position="663"/>
    </location>
</feature>
<feature type="topological domain" description="Extracellular" evidence="2">
    <location>
        <begin position="664"/>
        <end position="679"/>
    </location>
</feature>
<feature type="transmembrane region" description="Helical; Name=8" evidence="2">
    <location>
        <begin position="680"/>
        <end position="700"/>
    </location>
</feature>
<feature type="topological domain" description="Cytoplasmic" evidence="2">
    <location>
        <begin position="701"/>
        <end position="706"/>
    </location>
</feature>
<feature type="transmembrane region" description="Helical; Name=9" evidence="2">
    <location>
        <begin position="707"/>
        <end position="727"/>
    </location>
</feature>
<feature type="topological domain" description="Extracellular" evidence="2">
    <location>
        <begin position="728"/>
        <end position="746"/>
    </location>
</feature>
<feature type="transmembrane region" description="Helical; Name=10" evidence="2">
    <location>
        <begin position="747"/>
        <end position="767"/>
    </location>
</feature>
<feature type="topological domain" description="Cytoplasmic" evidence="2">
    <location>
        <begin position="768"/>
        <end position="773"/>
    </location>
</feature>
<feature type="transmembrane region" description="Helical; Name=11" evidence="2">
    <location>
        <begin position="774"/>
        <end position="794"/>
    </location>
</feature>
<feature type="topological domain" description="Extracellular" evidence="2">
    <location>
        <begin position="795"/>
        <end position="807"/>
    </location>
</feature>
<feature type="transmembrane region" description="Helical; Name=12" evidence="2">
    <location>
        <begin position="808"/>
        <end position="828"/>
    </location>
</feature>
<feature type="topological domain" description="Cytoplasmic" evidence="2">
    <location>
        <begin position="829"/>
        <end position="863"/>
    </location>
</feature>
<feature type="region of interest" description="Disordered" evidence="3">
    <location>
        <begin position="1"/>
        <end position="208"/>
    </location>
</feature>
<feature type="region of interest" description="Disordered" evidence="3">
    <location>
        <begin position="286"/>
        <end position="307"/>
    </location>
</feature>
<feature type="region of interest" description="Disordered" evidence="3">
    <location>
        <begin position="332"/>
        <end position="354"/>
    </location>
</feature>
<feature type="compositionally biased region" description="Basic and acidic residues" evidence="3">
    <location>
        <begin position="28"/>
        <end position="46"/>
    </location>
</feature>
<feature type="compositionally biased region" description="Polar residues" evidence="3">
    <location>
        <begin position="47"/>
        <end position="59"/>
    </location>
</feature>
<feature type="compositionally biased region" description="Low complexity" evidence="3">
    <location>
        <begin position="72"/>
        <end position="85"/>
    </location>
</feature>
<feature type="compositionally biased region" description="Polar residues" evidence="3">
    <location>
        <begin position="114"/>
        <end position="129"/>
    </location>
</feature>
<feature type="compositionally biased region" description="Polar residues" evidence="3">
    <location>
        <begin position="177"/>
        <end position="187"/>
    </location>
</feature>
<feature type="compositionally biased region" description="Polar residues" evidence="3">
    <location>
        <begin position="336"/>
        <end position="347"/>
    </location>
</feature>
<feature type="modified residue" description="Phosphoserine" evidence="1">
    <location>
        <position position="254"/>
    </location>
</feature>
<feature type="modified residue" description="Phosphoserine" evidence="1">
    <location>
        <position position="255"/>
    </location>
</feature>
<feature type="modified residue" description="Phosphoserine" evidence="1">
    <location>
        <position position="256"/>
    </location>
</feature>
<feature type="modified residue" description="Phosphoserine" evidence="1">
    <location>
        <position position="326"/>
    </location>
</feature>
<feature type="modified residue" description="Phosphoserine" evidence="1">
    <location>
        <position position="328"/>
    </location>
</feature>
<feature type="modified residue" description="Phosphoserine" evidence="1">
    <location>
        <position position="851"/>
    </location>
</feature>
<feature type="modified residue" description="Phosphoserine" evidence="1">
    <location>
        <position position="852"/>
    </location>
</feature>
<feature type="glycosylation site" description="N-linked (GlcNAc...) asparagine" evidence="2">
    <location>
        <position position="434"/>
    </location>
</feature>
<comment type="function">
    <text evidence="1">Low-capacity facilitative transporter for trehalose. Does not transport maltose, sucrose or lactose. Mediates the bidirectional transfer of trehalose. Responsible for the transport of trehalose synthesized in the fat body and the incorporation of trehalose into other tissues that require a carbon source, thereby regulating trehalose levels in the hemolymph (By similarity).</text>
</comment>
<comment type="subcellular location">
    <subcellularLocation>
        <location evidence="1">Cell membrane</location>
        <topology evidence="1">Multi-pass membrane protein</topology>
    </subcellularLocation>
</comment>
<comment type="similarity">
    <text evidence="1 2">Belongs to the major facilitator superfamily. Sugar transporter (TC 2.A.1.1) family. Trehalose transporter subfamily.</text>
</comment>
<comment type="sequence caution" evidence="4">
    <conflict type="erroneous gene model prediction">
        <sequence resource="EMBL-CDS" id="EDW10361"/>
    </conflict>
</comment>
<proteinExistence type="inferred from homology"/>